<keyword id="KW-0021">Allosteric enzyme</keyword>
<keyword id="KW-0963">Cytoplasm</keyword>
<keyword id="KW-0342">GTP-binding</keyword>
<keyword id="KW-0378">Hydrolase</keyword>
<keyword id="KW-0479">Metal-binding</keyword>
<keyword id="KW-0547">Nucleotide-binding</keyword>
<keyword id="KW-0539">Nucleus</keyword>
<keyword id="KW-1185">Reference proteome</keyword>
<keyword id="KW-0783">Tetrahydrobiopterin biosynthesis</keyword>
<keyword id="KW-0862">Zinc</keyword>
<comment type="function">
    <text evidence="1">May positively regulate nitric oxide synthesis in endothelial cells. May be involved in dopamine synthesis. May modify pain sensitivity and persistence.</text>
</comment>
<comment type="catalytic activity">
    <reaction evidence="1">
        <text>GTP + H2O = 7,8-dihydroneopterin 3'-triphosphate + formate + H(+)</text>
        <dbReference type="Rhea" id="RHEA:17473"/>
        <dbReference type="ChEBI" id="CHEBI:15377"/>
        <dbReference type="ChEBI" id="CHEBI:15378"/>
        <dbReference type="ChEBI" id="CHEBI:15740"/>
        <dbReference type="ChEBI" id="CHEBI:37565"/>
        <dbReference type="ChEBI" id="CHEBI:58462"/>
        <dbReference type="EC" id="3.5.4.16"/>
    </reaction>
</comment>
<comment type="activity regulation">
    <text evidence="1">GTP shows a positive allosteric effect, and tetrahydrobiopterin inhibits the enzyme activity. Zinc is required for catalytic activity. Inhibited by Mg(2+).</text>
</comment>
<comment type="pathway">
    <text evidence="1">Cofactor biosynthesis; 7,8-dihydroneopterin triphosphate biosynthesis; 7,8-dihydroneopterin triphosphate from GTP: step 1/1.</text>
</comment>
<comment type="subunit">
    <text evidence="1">Toroid-shaped homodecamer, composed of two pentamers of five dimers.</text>
</comment>
<comment type="subcellular location">
    <subcellularLocation>
        <location evidence="1">Cytoplasm</location>
    </subcellularLocation>
    <subcellularLocation>
        <location evidence="1">Nucleus</location>
    </subcellularLocation>
</comment>
<comment type="similarity">
    <text evidence="3">Belongs to the GTP cyclohydrolase I family.</text>
</comment>
<dbReference type="EC" id="3.5.4.16" evidence="1"/>
<dbReference type="EMBL" id="Z49267">
    <property type="protein sequence ID" value="CAA89261.1"/>
    <property type="molecule type" value="mRNA"/>
</dbReference>
<dbReference type="PIR" id="I50646">
    <property type="entry name" value="I50646"/>
</dbReference>
<dbReference type="RefSeq" id="NP_990554.1">
    <property type="nucleotide sequence ID" value="NM_205223.1"/>
</dbReference>
<dbReference type="SMR" id="P50141"/>
<dbReference type="FunCoup" id="P50141">
    <property type="interactions" value="376"/>
</dbReference>
<dbReference type="STRING" id="9031.ENSGALP00000019895"/>
<dbReference type="PaxDb" id="9031-ENSGALP00000019895"/>
<dbReference type="GeneID" id="396146"/>
<dbReference type="KEGG" id="gga:396146"/>
<dbReference type="CTD" id="2643"/>
<dbReference type="VEuPathDB" id="HostDB:geneid_396146"/>
<dbReference type="eggNOG" id="KOG2698">
    <property type="taxonomic scope" value="Eukaryota"/>
</dbReference>
<dbReference type="InParanoid" id="P50141"/>
<dbReference type="OrthoDB" id="4966at2759"/>
<dbReference type="PhylomeDB" id="P50141"/>
<dbReference type="UniPathway" id="UPA00848">
    <property type="reaction ID" value="UER00151"/>
</dbReference>
<dbReference type="PRO" id="PR:P50141"/>
<dbReference type="Proteomes" id="UP000000539">
    <property type="component" value="Unassembled WGS sequence"/>
</dbReference>
<dbReference type="GO" id="GO:0005737">
    <property type="term" value="C:cytoplasm"/>
    <property type="evidence" value="ECO:0000314"/>
    <property type="project" value="AgBase"/>
</dbReference>
<dbReference type="GO" id="GO:0005634">
    <property type="term" value="C:nucleus"/>
    <property type="evidence" value="ECO:0007669"/>
    <property type="project" value="UniProtKB-SubCell"/>
</dbReference>
<dbReference type="GO" id="GO:0005525">
    <property type="term" value="F:GTP binding"/>
    <property type="evidence" value="ECO:0000318"/>
    <property type="project" value="GO_Central"/>
</dbReference>
<dbReference type="GO" id="GO:0003934">
    <property type="term" value="F:GTP cyclohydrolase I activity"/>
    <property type="evidence" value="ECO:0000314"/>
    <property type="project" value="AgBase"/>
</dbReference>
<dbReference type="GO" id="GO:0008270">
    <property type="term" value="F:zinc ion binding"/>
    <property type="evidence" value="ECO:0000318"/>
    <property type="project" value="GO_Central"/>
</dbReference>
<dbReference type="GO" id="GO:0045429">
    <property type="term" value="P:positive regulation of nitric oxide biosynthetic process"/>
    <property type="evidence" value="ECO:0000314"/>
    <property type="project" value="AgBase"/>
</dbReference>
<dbReference type="GO" id="GO:0006729">
    <property type="term" value="P:tetrahydrobiopterin biosynthetic process"/>
    <property type="evidence" value="ECO:0000314"/>
    <property type="project" value="AgBase"/>
</dbReference>
<dbReference type="GO" id="GO:0046654">
    <property type="term" value="P:tetrahydrofolate biosynthetic process"/>
    <property type="evidence" value="ECO:0007669"/>
    <property type="project" value="InterPro"/>
</dbReference>
<dbReference type="CDD" id="cd00642">
    <property type="entry name" value="GTP_cyclohydro1"/>
    <property type="match status" value="1"/>
</dbReference>
<dbReference type="FunFam" id="1.10.286.10:FF:000003">
    <property type="entry name" value="GTP cyclohydrolase 1"/>
    <property type="match status" value="1"/>
</dbReference>
<dbReference type="FunFam" id="3.30.1130.10:FF:000012">
    <property type="entry name" value="GTP cyclohydrolase 1"/>
    <property type="match status" value="1"/>
</dbReference>
<dbReference type="Gene3D" id="1.10.286.10">
    <property type="match status" value="1"/>
</dbReference>
<dbReference type="Gene3D" id="3.30.1130.10">
    <property type="match status" value="1"/>
</dbReference>
<dbReference type="HAMAP" id="MF_00223">
    <property type="entry name" value="FolE"/>
    <property type="match status" value="1"/>
</dbReference>
<dbReference type="InterPro" id="IPR043133">
    <property type="entry name" value="GTP-CH-I_C/QueF"/>
</dbReference>
<dbReference type="InterPro" id="IPR043134">
    <property type="entry name" value="GTP-CH-I_N"/>
</dbReference>
<dbReference type="InterPro" id="IPR001474">
    <property type="entry name" value="GTP_CycHdrlase_I"/>
</dbReference>
<dbReference type="InterPro" id="IPR018234">
    <property type="entry name" value="GTP_CycHdrlase_I_CS"/>
</dbReference>
<dbReference type="InterPro" id="IPR020602">
    <property type="entry name" value="GTP_CycHdrlase_I_dom"/>
</dbReference>
<dbReference type="NCBIfam" id="TIGR00063">
    <property type="entry name" value="folE"/>
    <property type="match status" value="1"/>
</dbReference>
<dbReference type="NCBIfam" id="NF006825">
    <property type="entry name" value="PRK09347.1-2"/>
    <property type="match status" value="1"/>
</dbReference>
<dbReference type="NCBIfam" id="NF006826">
    <property type="entry name" value="PRK09347.1-3"/>
    <property type="match status" value="1"/>
</dbReference>
<dbReference type="PANTHER" id="PTHR11109:SF11">
    <property type="entry name" value="GTP CYCLOHYDROLASE 1"/>
    <property type="match status" value="1"/>
</dbReference>
<dbReference type="PANTHER" id="PTHR11109">
    <property type="entry name" value="GTP CYCLOHYDROLASE I"/>
    <property type="match status" value="1"/>
</dbReference>
<dbReference type="Pfam" id="PF01227">
    <property type="entry name" value="GTP_cyclohydroI"/>
    <property type="match status" value="1"/>
</dbReference>
<dbReference type="SUPFAM" id="SSF55620">
    <property type="entry name" value="Tetrahydrobiopterin biosynthesis enzymes-like"/>
    <property type="match status" value="1"/>
</dbReference>
<dbReference type="PROSITE" id="PS00859">
    <property type="entry name" value="GTP_CYCLOHYDROL_1_1"/>
    <property type="match status" value="1"/>
</dbReference>
<dbReference type="PROSITE" id="PS00860">
    <property type="entry name" value="GTP_CYCLOHYDROL_1_2"/>
    <property type="match status" value="1"/>
</dbReference>
<accession>P50141</accession>
<reference key="1">
    <citation type="journal article" date="1995" name="Biochem. Biophys. Res. Commun.">
        <title>Homology cloning of GTP-cyclohydrolase I from various unrelated eukaryotes by reverse-transcription polymerase chain reaction using a general set of degenerate primers.</title>
        <authorList>
            <person name="Maier J."/>
            <person name="Witter K."/>
            <person name="Guetlich M."/>
            <person name="Ziegler I."/>
            <person name="Werner T."/>
            <person name="Ninnemann H."/>
        </authorList>
    </citation>
    <scope>NUCLEOTIDE SEQUENCE [MRNA]</scope>
    <source>
        <tissue>Liver</tissue>
    </source>
</reference>
<feature type="chain" id="PRO_0000119477" description="GTP cyclohydrolase 1">
    <location>
        <begin position="1"/>
        <end position="236"/>
    </location>
</feature>
<feature type="region of interest" description="Disordered" evidence="2">
    <location>
        <begin position="1"/>
        <end position="52"/>
    </location>
</feature>
<feature type="binding site" evidence="1">
    <location>
        <position position="127"/>
    </location>
    <ligand>
        <name>Zn(2+)</name>
        <dbReference type="ChEBI" id="CHEBI:29105"/>
    </ligand>
</feature>
<feature type="binding site" evidence="1">
    <location>
        <position position="130"/>
    </location>
    <ligand>
        <name>Zn(2+)</name>
        <dbReference type="ChEBI" id="CHEBI:29105"/>
    </ligand>
</feature>
<feature type="binding site" evidence="1">
    <location>
        <position position="198"/>
    </location>
    <ligand>
        <name>Zn(2+)</name>
        <dbReference type="ChEBI" id="CHEBI:29105"/>
    </ligand>
</feature>
<organism>
    <name type="scientific">Gallus gallus</name>
    <name type="common">Chicken</name>
    <dbReference type="NCBI Taxonomy" id="9031"/>
    <lineage>
        <taxon>Eukaryota</taxon>
        <taxon>Metazoa</taxon>
        <taxon>Chordata</taxon>
        <taxon>Craniata</taxon>
        <taxon>Vertebrata</taxon>
        <taxon>Euteleostomi</taxon>
        <taxon>Archelosauria</taxon>
        <taxon>Archosauria</taxon>
        <taxon>Dinosauria</taxon>
        <taxon>Saurischia</taxon>
        <taxon>Theropoda</taxon>
        <taxon>Coelurosauria</taxon>
        <taxon>Aves</taxon>
        <taxon>Neognathae</taxon>
        <taxon>Galloanserae</taxon>
        <taxon>Galliformes</taxon>
        <taxon>Phasianidae</taxon>
        <taxon>Phasianinae</taxon>
        <taxon>Gallus</taxon>
    </lineage>
</organism>
<gene>
    <name type="primary">GCH1</name>
</gene>
<proteinExistence type="evidence at transcript level"/>
<sequence>MAAARSCNGYARREGPPSPKLGTEKPRVSAGSGGSGDGWRGERPRSEEDNELSLPSLAAAYTTILRALGEDPERQGLLKTPWRAATAMQFFTKGYQETIADVLNDAIFDEDHDEMVIVKNIDMFSLCEHHLVPFVGKVHIGYLPNKQVLGLSKLARIVEIYSRRLQVQERLTKQIAIAITEALQPAGVGVVIEATHMCMVMRGVQKMNSKTATSTMLGVFREDPKTREEFLTLIRS</sequence>
<evidence type="ECO:0000250" key="1">
    <source>
        <dbReference type="UniProtKB" id="P30793"/>
    </source>
</evidence>
<evidence type="ECO:0000256" key="2">
    <source>
        <dbReference type="SAM" id="MobiDB-lite"/>
    </source>
</evidence>
<evidence type="ECO:0000305" key="3"/>
<protein>
    <recommendedName>
        <fullName>GTP cyclohydrolase 1</fullName>
        <ecNumber evidence="1">3.5.4.16</ecNumber>
    </recommendedName>
    <alternativeName>
        <fullName>GTP cyclohydrolase I</fullName>
        <shortName>GTP-CH-I</shortName>
    </alternativeName>
</protein>
<name>GCH1_CHICK</name>